<name>PHYB_ARATH</name>
<sequence>MVSGVGGSGGGRGGGRGGEEEPSSSHTPNNRRGGEQAQSSGTKSLRPRSNTESMSKAIQQYTVDARLHAVFEQSGESGKSFDYSQSLKTTTYGSSVPEQQITAYLSRIQRGGYIQPFGCMIAVDESSFRIIGYSENAREMLGIMPQSVPTLEKPEILAMGTDVRSLFTSSSSILLERAFVAREITLLNPVWIHSKNTGKPFYAILHRIDVGVVIDLEPARTEDPALSIAGAVQSQKLAVRAISQLQALPGGDIKLLCDTVVESVRDLTGYDRVMVYKFHEDEHGEVVAESKRDDLEPYIGLHYPATDIPQASRFLFKQNRVRMIVDCNATPVLVVQDDRLTQSMCLVGSTLRAPHGCHSQYMANMGSIASLAMAVIINGNEDDGSNVASGRSSMRLWGLVVCHHTSSRCIPFPLRYACEFLMQAFGLQLNMELQLALQMSEKRVLRTQTLLCDMLLRDSPAGIVTQSPSIMDLVKCDGAAFLYHGKYYPLGVAPSEVQIKDVVEWLLANHADSTGLSTDSLGDAGYPGAAALGDAVCGMAVAYITKRDFLFWFRSHTAKEIKWGGAKHHPEDKDDGQRMHPRSSFQAFLEVVKSRSQPWETAEMDAIHSLQLILRDSFKESEAAMNSKVVDGVVQPCRDMAGEQGIDELGAVAREMVRLIETATVPIFAVDAGGCINGWNAKIAELTGLSVEEAMGKSLVSDLIYKENEATVNKLLSRALRGDEEKNVEVKLKTFSPELQGKAVFVVVNACSSKDYLNNIVGVCFVGQDVTSQKIVMDKFINIQGDYKAIVHSPNPLIPPIFAADENTCCLEWNMAMEKLTGWSRSEVIGKMIVGEVFGSCCMLKGPDALTKFMIVLHNAIGGQDTDKFPFPFFDRNGKFVQALLTANKRVSLEGKVIGAFCFLQIPSPELQQALAVQRRQDTECFTKAKELAYICQVIKNPLSGMRFANSLLEATDLNEDQKQLLETSVSCEKQISRIVGDMDLESIEDGSFVLKREEFFLGSVINAIVSQAMFLLRDRGLQLIRDIPEEIKSIEVFGDQIRIQQLLAEFLLSIIRYAPSQEWVEIHLSQLSKQMADGFAAIRTEFRMACPGEGLPPELVRDMFHSSRWTSPEGLGLSVCRKILKLMNGEVQYIRESERSYFLIILELPVPRKRPLSTASGSGDMMLMMPY</sequence>
<accession>P14713</accession>
<accession>Q6S4P0</accession>
<organism>
    <name type="scientific">Arabidopsis thaliana</name>
    <name type="common">Mouse-ear cress</name>
    <dbReference type="NCBI Taxonomy" id="3702"/>
    <lineage>
        <taxon>Eukaryota</taxon>
        <taxon>Viridiplantae</taxon>
        <taxon>Streptophyta</taxon>
        <taxon>Embryophyta</taxon>
        <taxon>Tracheophyta</taxon>
        <taxon>Spermatophyta</taxon>
        <taxon>Magnoliopsida</taxon>
        <taxon>eudicotyledons</taxon>
        <taxon>Gunneridae</taxon>
        <taxon>Pentapetalae</taxon>
        <taxon>rosids</taxon>
        <taxon>malvids</taxon>
        <taxon>Brassicales</taxon>
        <taxon>Brassicaceae</taxon>
        <taxon>Camelineae</taxon>
        <taxon>Arabidopsis</taxon>
    </lineage>
</organism>
<comment type="function">
    <text evidence="5 6 8 17 21 22">Regulatory photoreceptor which exists in two forms that are reversibly interconvertible by light: the Pr form that absorbs maximally in the red region of the spectrum and the Pfr form that absorbs maximally in the far-red region. Photoconversion of Pr to Pfr induces an array of morphogenetic responses, whereas reconversion of Pfr to Pr cancels the induction of those responses. Pfr controls the expression of a number of nuclear genes including those encoding the small subunit of ribulose-bisphosphate carboxylase, chlorophyll A/B binding protein, protochlorophyllide reductase, rRNA, etc. It also controls the expression of its own gene(s) in a negative feedback fashion. Involved in the flowering time regulation. Involved in light-regulated circadian phase control that triggers stomatal aperture, stomatal conductance, and CO(2) assimilation. Implicated in red light perception, and, to a lower extent, in blue light signaling (PubMed:12177480). Controls thermomorphogenesis in the daytime and regulates temperature responses by associating with the promoters of key target genes in a temperature-dependent manner and subsequently repressing their expression in a PIF4-dependent manner (temperature-responsive transcriptional regulator); this process requires PTAC12/HMR/PAP5 (transcriptional activator) (PubMed:27789797, PubMed:30635559). Thermal timer that integrates temperature information over the course of the night (PubMed:27789797). Detabilizes UNE10/PIF8 in red light (PubMed:31732705).</text>
</comment>
<comment type="subunit">
    <text evidence="4 6 8 9 10 11 12 14 15 16 19 20 22 23 24">Homodimer (PubMed:24982198). Interacts with ADO1 and PKS4. Stabilized by interactions with PAPP5 and FYPP3 which are enhanced in the phosphorylated Pfr form. Interacts with VOZ1 and VOZ2 (PubMed:11260718, PubMed:12468726, PubMed:15707897, PubMed:18390804, PubMed:22904146). Binds, via its photosensory domain, to PTAC12/HMR/PAP5 when photoactivated; this interaction stimulates its localization to photobodies (PubMed:22895253). Interacts with CRY1 specifically when in the dark/far-red (Pr) state, but not when red light-activated (Pfr) (PubMed:22577138). Interacts with PIF4 and PIF5 in response to low blue light (LBL) (PubMed:26724867). Component of a red light-dependent nuclear complex made of PHL, PHYB and CO. Interacts directly with PHL (PubMed:24127609). Binds to UNE10/PIF8 when red light-activated (Pfr) (PubMed:31732705). When light-activated, interacts with PCH1 and PCHL (PubMed:29263319). Associated with DRT111/RSN2/SFPS, SMP2 and SWAP1 in nuclear photobodies upon response to red light (Pfr form) (PubMed:28760995, PubMed:35222493, PubMed:36282917).</text>
</comment>
<comment type="interaction">
    <interactant intactId="EBI-300727">
        <id>P14713</id>
    </interactant>
    <interactant intactId="EBI-625213">
        <id>O82798</id>
        <label>ARR4</label>
    </interactant>
    <organismsDiffer>false</organismsDiffer>
    <experiments>3</experiments>
</comment>
<comment type="interaction">
    <interactant intactId="EBI-300727">
        <id>P14713</id>
    </interactant>
    <interactant intactId="EBI-531555">
        <id>Q96524</id>
        <label>CRY2</label>
    </interactant>
    <organismsDiffer>false</organismsDiffer>
    <experiments>3</experiments>
</comment>
<comment type="interaction">
    <interactant intactId="EBI-300727">
        <id>P14713</id>
    </interactant>
    <interactant intactId="EBI-300727">
        <id>P14713</id>
        <label>PHYB</label>
    </interactant>
    <organismsDiffer>false</organismsDiffer>
    <experiments>3</experiments>
</comment>
<comment type="interaction">
    <interactant intactId="EBI-300727">
        <id>P14713</id>
    </interactant>
    <interactant intactId="EBI-624366">
        <id>P14714</id>
        <label>PHYC</label>
    </interactant>
    <organismsDiffer>false</organismsDiffer>
    <experiments>5</experiments>
</comment>
<comment type="interaction">
    <interactant intactId="EBI-300727">
        <id>P14713</id>
    </interactant>
    <interactant intactId="EBI-624382">
        <id>P42497</id>
        <label>PHYD</label>
    </interactant>
    <organismsDiffer>false</organismsDiffer>
    <experiments>6</experiments>
</comment>
<comment type="interaction">
    <interactant intactId="EBI-300727">
        <id>P14713</id>
    </interactant>
    <interactant intactId="EBI-624404">
        <id>P42498</id>
        <label>PHYE</label>
    </interactant>
    <organismsDiffer>false</organismsDiffer>
    <experiments>5</experiments>
</comment>
<comment type="interaction">
    <interactant intactId="EBI-300727">
        <id>P14713</id>
    </interactant>
    <interactant intactId="EBI-630400">
        <id>Q8GZM7</id>
        <label>PIF1</label>
    </interactant>
    <organismsDiffer>false</organismsDiffer>
    <experiments>3</experiments>
</comment>
<comment type="interaction">
    <interactant intactId="EBI-300727">
        <id>P14713</id>
    </interactant>
    <interactant intactId="EBI-625701">
        <id>O80536</id>
        <label>PIF3</label>
    </interactant>
    <organismsDiffer>false</organismsDiffer>
    <experiments>22</experiments>
</comment>
<comment type="interaction">
    <interactant intactId="EBI-300727">
        <id>P14713</id>
    </interactant>
    <interactant intactId="EBI-625732">
        <id>Q8W2F3-2</id>
        <label>PIF4</label>
    </interactant>
    <organismsDiffer>false</organismsDiffer>
    <experiments>3</experiments>
</comment>
<comment type="interaction">
    <interactant intactId="EBI-300727">
        <id>P14713</id>
    </interactant>
    <interactant intactId="EBI-626200">
        <id>Q9SWI1</id>
        <label>PKS1</label>
    </interactant>
    <organismsDiffer>false</organismsDiffer>
    <experiments>2</experiments>
</comment>
<comment type="interaction">
    <interactant intactId="EBI-300727">
        <id>P14713</id>
    </interactant>
    <interactant intactId="EBI-6306928">
        <id>Q9SGQ0</id>
        <label>VOZ1</label>
    </interactant>
    <organismsDiffer>false</organismsDiffer>
    <experiments>4</experiments>
</comment>
<comment type="interaction">
    <interactant intactId="EBI-300727">
        <id>P14713</id>
    </interactant>
    <interactant intactId="EBI-6306942">
        <id>Q9SLB9</id>
        <label>VOZ2</label>
    </interactant>
    <organismsDiffer>false</organismsDiffer>
    <experiments>4</experiments>
</comment>
<comment type="subcellular location">
    <subcellularLocation>
        <location evidence="8">Cytoplasm</location>
    </subcellularLocation>
    <subcellularLocation>
        <location evidence="8">Nucleus</location>
        <location evidence="8">Nucleoplasm</location>
    </subcellularLocation>
    <subcellularLocation>
        <location evidence="8">Nucleus speckle</location>
    </subcellularLocation>
    <subcellularLocation>
        <location evidence="14 19 20 23">Nucleus</location>
    </subcellularLocation>
    <text evidence="8 19 20 23">Cytoplasmic in darkness, but translocated to the nucleus upon illumination, when associated with PAPP5 into speckles (PubMed:15707897). Red light-activated (Pfr) phyB is observed in subnuclear light-induced structures called photobodies, while dark/far-red (Pr) phyB rapidly dissociates (PubMed:29263319, PubMed:35222493).</text>
</comment>
<comment type="tissue specificity">
    <text evidence="13">Expressed in fruits, flowers, leaves, stems, seedlings and roots.</text>
</comment>
<comment type="developmental stage">
    <text evidence="13">Accumulates progressively in maturating seeds to reach a peak in dry seeds (PubMed:23708772). Expressed upon seed imbibition (PubMed:23708772).</text>
</comment>
<comment type="induction">
    <text evidence="17">Inactivation is proportional to temperature in the dark.</text>
</comment>
<comment type="PTM">
    <text evidence="15 18">Contains one covalently linked phytochromobilin chromophore.</text>
</comment>
<comment type="disruption phenotype">
    <text evidence="5 21 23">Reduced temperature responses in light (PubMed:30635559). In oop1, defects in circadian timing with altered phase; early timing of the peak (acrophase) of multiple circadian rhythms such as leaf movement, CO(2) assimilation and light-induced gene expression. Strong photoperception defect in red light leading to long hypocotyls; this phenotype is increased when blue lights are combined to red lights. Increased sensitivity to SO(2). Elongated internodes before the transition to flowering when grown in short day conditions. Plants lacking both SMP2 and PHYB have short hypocotyls in red light (PubMed:35222493).</text>
</comment>
<comment type="similarity">
    <text evidence="28">Belongs to the phytochrome family.</text>
</comment>
<dbReference type="EMBL" id="X17342">
    <property type="protein sequence ID" value="CAA35222.1"/>
    <property type="molecule type" value="mRNA"/>
</dbReference>
<dbReference type="EMBL" id="L09262">
    <property type="status" value="NOT_ANNOTATED_CDS"/>
    <property type="molecule type" value="Genomic_DNA"/>
</dbReference>
<dbReference type="EMBL" id="AY466496">
    <property type="protein sequence ID" value="AAR32737.1"/>
    <property type="molecule type" value="Genomic_DNA"/>
</dbReference>
<dbReference type="EMBL" id="AC005724">
    <property type="protein sequence ID" value="AAD08948.1"/>
    <property type="molecule type" value="Genomic_DNA"/>
</dbReference>
<dbReference type="EMBL" id="CP002685">
    <property type="protein sequence ID" value="AEC06808.1"/>
    <property type="molecule type" value="Genomic_DNA"/>
</dbReference>
<dbReference type="PIR" id="B33473">
    <property type="entry name" value="FKMUB"/>
</dbReference>
<dbReference type="RefSeq" id="NP_179469.1">
    <property type="nucleotide sequence ID" value="NM_127435.4"/>
</dbReference>
<dbReference type="PDB" id="4OUR">
    <property type="method" value="X-ray"/>
    <property type="resolution" value="3.40 A"/>
    <property type="chains" value="A/B=90-624"/>
</dbReference>
<dbReference type="PDB" id="7RZW">
    <property type="method" value="EM"/>
    <property type="resolution" value="3.30 A"/>
    <property type="chains" value="A/B=1-1172"/>
</dbReference>
<dbReference type="PDB" id="8YB4">
    <property type="method" value="EM"/>
    <property type="resolution" value="3.10 A"/>
    <property type="chains" value="A/B=1-1172"/>
</dbReference>
<dbReference type="PDB" id="9IUZ">
    <property type="method" value="EM"/>
    <property type="resolution" value="3.19 A"/>
    <property type="chains" value="A/B=1-908"/>
</dbReference>
<dbReference type="PDBsum" id="4OUR"/>
<dbReference type="PDBsum" id="7RZW"/>
<dbReference type="PDBsum" id="8YB4"/>
<dbReference type="PDBsum" id="9IUZ"/>
<dbReference type="EMDB" id="EMD-24780"/>
<dbReference type="EMDB" id="EMD-28870"/>
<dbReference type="EMDB" id="EMD-28871"/>
<dbReference type="EMDB" id="EMD-28872"/>
<dbReference type="EMDB" id="EMD-39108"/>
<dbReference type="EMDB" id="EMD-60916"/>
<dbReference type="SMR" id="P14713"/>
<dbReference type="BioGRID" id="1751">
    <property type="interactions" value="70"/>
</dbReference>
<dbReference type="DIP" id="DIP-31742N"/>
<dbReference type="FunCoup" id="P14713">
    <property type="interactions" value="406"/>
</dbReference>
<dbReference type="IntAct" id="P14713">
    <property type="interactions" value="19"/>
</dbReference>
<dbReference type="MINT" id="P14713"/>
<dbReference type="STRING" id="3702.P14713"/>
<dbReference type="iPTMnet" id="P14713"/>
<dbReference type="PaxDb" id="3702-AT2G18790.1"/>
<dbReference type="ProteomicsDB" id="234908"/>
<dbReference type="EnsemblPlants" id="AT2G18790.1">
    <property type="protein sequence ID" value="AT2G18790.1"/>
    <property type="gene ID" value="AT2G18790"/>
</dbReference>
<dbReference type="GeneID" id="816394"/>
<dbReference type="Gramene" id="AT2G18790.1">
    <property type="protein sequence ID" value="AT2G18790.1"/>
    <property type="gene ID" value="AT2G18790"/>
</dbReference>
<dbReference type="KEGG" id="ath:AT2G18790"/>
<dbReference type="Araport" id="AT2G18790"/>
<dbReference type="TAIR" id="AT2G18790">
    <property type="gene designation" value="PHYB"/>
</dbReference>
<dbReference type="eggNOG" id="ENOG502QPNJ">
    <property type="taxonomic scope" value="Eukaryota"/>
</dbReference>
<dbReference type="HOGENOM" id="CLU_010418_0_0_1"/>
<dbReference type="InParanoid" id="P14713"/>
<dbReference type="PhylomeDB" id="P14713"/>
<dbReference type="CD-CODE" id="988B4B02">
    <property type="entry name" value="Plant Photobody"/>
</dbReference>
<dbReference type="EvolutionaryTrace" id="P14713"/>
<dbReference type="PRO" id="PR:P14713"/>
<dbReference type="Proteomes" id="UP000006548">
    <property type="component" value="Chromosome 2"/>
</dbReference>
<dbReference type="ExpressionAtlas" id="P14713">
    <property type="expression patterns" value="baseline and differential"/>
</dbReference>
<dbReference type="GO" id="GO:0005829">
    <property type="term" value="C:cytosol"/>
    <property type="evidence" value="ECO:0000314"/>
    <property type="project" value="TAIR"/>
</dbReference>
<dbReference type="GO" id="GO:0016604">
    <property type="term" value="C:nuclear body"/>
    <property type="evidence" value="ECO:0000314"/>
    <property type="project" value="TAIR"/>
</dbReference>
<dbReference type="GO" id="GO:0016607">
    <property type="term" value="C:nuclear speck"/>
    <property type="evidence" value="ECO:0007669"/>
    <property type="project" value="UniProtKB-SubCell"/>
</dbReference>
<dbReference type="GO" id="GO:0005634">
    <property type="term" value="C:nucleus"/>
    <property type="evidence" value="ECO:0000314"/>
    <property type="project" value="UniProtKB"/>
</dbReference>
<dbReference type="GO" id="GO:0031516">
    <property type="term" value="F:far-red light photoreceptor activity"/>
    <property type="evidence" value="ECO:0000314"/>
    <property type="project" value="TAIR"/>
</dbReference>
<dbReference type="GO" id="GO:0042802">
    <property type="term" value="F:identical protein binding"/>
    <property type="evidence" value="ECO:0000353"/>
    <property type="project" value="IntAct"/>
</dbReference>
<dbReference type="GO" id="GO:0000155">
    <property type="term" value="F:phosphorelay sensor kinase activity"/>
    <property type="evidence" value="ECO:0007669"/>
    <property type="project" value="InterPro"/>
</dbReference>
<dbReference type="GO" id="GO:1990841">
    <property type="term" value="F:promoter-specific chromatin binding"/>
    <property type="evidence" value="ECO:0000314"/>
    <property type="project" value="UniProtKB"/>
</dbReference>
<dbReference type="GO" id="GO:0042803">
    <property type="term" value="F:protein homodimerization activity"/>
    <property type="evidence" value="ECO:0000314"/>
    <property type="project" value="UniProtKB"/>
</dbReference>
<dbReference type="GO" id="GO:0031517">
    <property type="term" value="F:red light photoreceptor activity"/>
    <property type="evidence" value="ECO:0000314"/>
    <property type="project" value="TAIR"/>
</dbReference>
<dbReference type="GO" id="GO:0009883">
    <property type="term" value="F:red or far-red light photoreceptor activity"/>
    <property type="evidence" value="ECO:0000315"/>
    <property type="project" value="TAIR"/>
</dbReference>
<dbReference type="GO" id="GO:0043565">
    <property type="term" value="F:sequence-specific DNA binding"/>
    <property type="evidence" value="ECO:0000314"/>
    <property type="project" value="UniProtKB"/>
</dbReference>
<dbReference type="GO" id="GO:0009687">
    <property type="term" value="P:abscisic acid metabolic process"/>
    <property type="evidence" value="ECO:0000315"/>
    <property type="project" value="TAIR"/>
</dbReference>
<dbReference type="GO" id="GO:0006325">
    <property type="term" value="P:chromatin organization"/>
    <property type="evidence" value="ECO:0000315"/>
    <property type="project" value="TAIR"/>
</dbReference>
<dbReference type="GO" id="GO:0010617">
    <property type="term" value="P:circadian regulation of calcium ion oscillation"/>
    <property type="evidence" value="ECO:0000315"/>
    <property type="project" value="TAIR"/>
</dbReference>
<dbReference type="GO" id="GO:0009584">
    <property type="term" value="P:detection of visible light"/>
    <property type="evidence" value="ECO:0007669"/>
    <property type="project" value="InterPro"/>
</dbReference>
<dbReference type="GO" id="GO:0009649">
    <property type="term" value="P:entrainment of circadian clock"/>
    <property type="evidence" value="ECO:0000315"/>
    <property type="project" value="TAIR"/>
</dbReference>
<dbReference type="GO" id="GO:0009630">
    <property type="term" value="P:gravitropism"/>
    <property type="evidence" value="ECO:0000315"/>
    <property type="project" value="TAIR"/>
</dbReference>
<dbReference type="GO" id="GO:0009867">
    <property type="term" value="P:jasmonic acid mediated signaling pathway"/>
    <property type="evidence" value="ECO:0000315"/>
    <property type="project" value="TAIR"/>
</dbReference>
<dbReference type="GO" id="GO:0045892">
    <property type="term" value="P:negative regulation of DNA-templated transcription"/>
    <property type="evidence" value="ECO:0000314"/>
    <property type="project" value="UniProtKB"/>
</dbReference>
<dbReference type="GO" id="GO:0009640">
    <property type="term" value="P:photomorphogenesis"/>
    <property type="evidence" value="ECO:0000315"/>
    <property type="project" value="TAIR"/>
</dbReference>
<dbReference type="GO" id="GO:0015979">
    <property type="term" value="P:photosynthesis"/>
    <property type="evidence" value="ECO:0000315"/>
    <property type="project" value="TAIR"/>
</dbReference>
<dbReference type="GO" id="GO:0009638">
    <property type="term" value="P:phototropism"/>
    <property type="evidence" value="ECO:0000315"/>
    <property type="project" value="TAIR"/>
</dbReference>
<dbReference type="GO" id="GO:0017012">
    <property type="term" value="P:protein-phytochromobilin linkage"/>
    <property type="evidence" value="ECO:0000314"/>
    <property type="project" value="UniProtKB"/>
</dbReference>
<dbReference type="GO" id="GO:0010161">
    <property type="term" value="P:red light signaling pathway"/>
    <property type="evidence" value="ECO:0000315"/>
    <property type="project" value="TAIR"/>
</dbReference>
<dbReference type="GO" id="GO:0031347">
    <property type="term" value="P:regulation of defense response"/>
    <property type="evidence" value="ECO:0000315"/>
    <property type="project" value="TAIR"/>
</dbReference>
<dbReference type="GO" id="GO:2000028">
    <property type="term" value="P:regulation of photoperiodism, flowering"/>
    <property type="evidence" value="ECO:0000315"/>
    <property type="project" value="TAIR"/>
</dbReference>
<dbReference type="GO" id="GO:0010029">
    <property type="term" value="P:regulation of seed germination"/>
    <property type="evidence" value="ECO:0000315"/>
    <property type="project" value="TAIR"/>
</dbReference>
<dbReference type="GO" id="GO:0009409">
    <property type="term" value="P:response to cold"/>
    <property type="evidence" value="ECO:0000315"/>
    <property type="project" value="TAIR"/>
</dbReference>
<dbReference type="GO" id="GO:0010218">
    <property type="term" value="P:response to far red light"/>
    <property type="evidence" value="ECO:0000315"/>
    <property type="project" value="TAIR"/>
</dbReference>
<dbReference type="GO" id="GO:0009416">
    <property type="term" value="P:response to light stimulus"/>
    <property type="evidence" value="ECO:0000314"/>
    <property type="project" value="UniProtKB"/>
</dbReference>
<dbReference type="GO" id="GO:0010244">
    <property type="term" value="P:response to low fluence blue light stimulus by blue low-fluence system"/>
    <property type="evidence" value="ECO:0000314"/>
    <property type="project" value="UniProtKB"/>
</dbReference>
<dbReference type="GO" id="GO:0010202">
    <property type="term" value="P:response to low fluence red light stimulus"/>
    <property type="evidence" value="ECO:0000315"/>
    <property type="project" value="TAIR"/>
</dbReference>
<dbReference type="GO" id="GO:0009266">
    <property type="term" value="P:response to temperature stimulus"/>
    <property type="evidence" value="ECO:0000315"/>
    <property type="project" value="UniProtKB"/>
</dbReference>
<dbReference type="GO" id="GO:0010374">
    <property type="term" value="P:stomatal complex development"/>
    <property type="evidence" value="ECO:0000315"/>
    <property type="project" value="TAIR"/>
</dbReference>
<dbReference type="GO" id="GO:0010148">
    <property type="term" value="P:transpiration"/>
    <property type="evidence" value="ECO:0000315"/>
    <property type="project" value="TAIR"/>
</dbReference>
<dbReference type="CDD" id="cd16932">
    <property type="entry name" value="HATPase_Phy-like"/>
    <property type="match status" value="1"/>
</dbReference>
<dbReference type="CDD" id="cd00082">
    <property type="entry name" value="HisKA"/>
    <property type="match status" value="1"/>
</dbReference>
<dbReference type="CDD" id="cd00130">
    <property type="entry name" value="PAS"/>
    <property type="match status" value="2"/>
</dbReference>
<dbReference type="FunFam" id="3.30.450.20:FF:000034">
    <property type="entry name" value="Phytochrome"/>
    <property type="match status" value="1"/>
</dbReference>
<dbReference type="FunFam" id="3.30.450.20:FF:000039">
    <property type="entry name" value="Phytochrome"/>
    <property type="match status" value="1"/>
</dbReference>
<dbReference type="FunFam" id="3.30.450.270:FF:000001">
    <property type="entry name" value="Phytochrome"/>
    <property type="match status" value="1"/>
</dbReference>
<dbReference type="FunFam" id="3.30.450.40:FF:000006">
    <property type="entry name" value="Phytochrome"/>
    <property type="match status" value="1"/>
</dbReference>
<dbReference type="FunFam" id="3.30.565.10:FF:000044">
    <property type="entry name" value="Phytochrome"/>
    <property type="match status" value="1"/>
</dbReference>
<dbReference type="Gene3D" id="3.30.450.270">
    <property type="match status" value="1"/>
</dbReference>
<dbReference type="Gene3D" id="3.30.450.40">
    <property type="match status" value="1"/>
</dbReference>
<dbReference type="Gene3D" id="3.30.565.10">
    <property type="entry name" value="Histidine kinase-like ATPase, C-terminal domain"/>
    <property type="match status" value="1"/>
</dbReference>
<dbReference type="Gene3D" id="3.30.450.20">
    <property type="entry name" value="PAS domain"/>
    <property type="match status" value="3"/>
</dbReference>
<dbReference type="InterPro" id="IPR003018">
    <property type="entry name" value="GAF"/>
</dbReference>
<dbReference type="InterPro" id="IPR029016">
    <property type="entry name" value="GAF-like_dom_sf"/>
</dbReference>
<dbReference type="InterPro" id="IPR036890">
    <property type="entry name" value="HATPase_C_sf"/>
</dbReference>
<dbReference type="InterPro" id="IPR005467">
    <property type="entry name" value="His_kinase_dom"/>
</dbReference>
<dbReference type="InterPro" id="IPR003661">
    <property type="entry name" value="HisK_dim/P_dom"/>
</dbReference>
<dbReference type="InterPro" id="IPR000014">
    <property type="entry name" value="PAS"/>
</dbReference>
<dbReference type="InterPro" id="IPR035965">
    <property type="entry name" value="PAS-like_dom_sf"/>
</dbReference>
<dbReference type="InterPro" id="IPR013654">
    <property type="entry name" value="PAS_2"/>
</dbReference>
<dbReference type="InterPro" id="IPR013767">
    <property type="entry name" value="PAS_fold"/>
</dbReference>
<dbReference type="InterPro" id="IPR044767">
    <property type="entry name" value="Phy_HATPase-like"/>
</dbReference>
<dbReference type="InterPro" id="IPR016132">
    <property type="entry name" value="Phyto_chromo_attachment"/>
</dbReference>
<dbReference type="InterPro" id="IPR013516">
    <property type="entry name" value="Phyto_chromo_BS"/>
</dbReference>
<dbReference type="InterPro" id="IPR001294">
    <property type="entry name" value="Phytochrome"/>
</dbReference>
<dbReference type="InterPro" id="IPR012129">
    <property type="entry name" value="Phytochrome_A-E"/>
</dbReference>
<dbReference type="InterPro" id="IPR013515">
    <property type="entry name" value="Phytochrome_cen-reg"/>
</dbReference>
<dbReference type="InterPro" id="IPR043150">
    <property type="entry name" value="Phytochrome_PHY_sf"/>
</dbReference>
<dbReference type="NCBIfam" id="TIGR00229">
    <property type="entry name" value="sensory_box"/>
    <property type="match status" value="1"/>
</dbReference>
<dbReference type="PANTHER" id="PTHR47876">
    <property type="entry name" value="OS08G0260000 PROTEIN"/>
    <property type="match status" value="1"/>
</dbReference>
<dbReference type="PANTHER" id="PTHR47876:SF3">
    <property type="entry name" value="PHYTOCHROME 1"/>
    <property type="match status" value="1"/>
</dbReference>
<dbReference type="Pfam" id="PF01590">
    <property type="entry name" value="GAF"/>
    <property type="match status" value="1"/>
</dbReference>
<dbReference type="Pfam" id="PF02518">
    <property type="entry name" value="HATPase_c"/>
    <property type="match status" value="1"/>
</dbReference>
<dbReference type="Pfam" id="PF00512">
    <property type="entry name" value="HisKA"/>
    <property type="match status" value="1"/>
</dbReference>
<dbReference type="Pfam" id="PF00989">
    <property type="entry name" value="PAS"/>
    <property type="match status" value="2"/>
</dbReference>
<dbReference type="Pfam" id="PF08446">
    <property type="entry name" value="PAS_2"/>
    <property type="match status" value="1"/>
</dbReference>
<dbReference type="Pfam" id="PF00360">
    <property type="entry name" value="PHY"/>
    <property type="match status" value="1"/>
</dbReference>
<dbReference type="PIRSF" id="PIRSF000084">
    <property type="entry name" value="Phytochrome"/>
    <property type="match status" value="1"/>
</dbReference>
<dbReference type="PRINTS" id="PR01033">
    <property type="entry name" value="PHYTOCHROME"/>
</dbReference>
<dbReference type="SMART" id="SM00065">
    <property type="entry name" value="GAF"/>
    <property type="match status" value="1"/>
</dbReference>
<dbReference type="SMART" id="SM00387">
    <property type="entry name" value="HATPase_c"/>
    <property type="match status" value="1"/>
</dbReference>
<dbReference type="SMART" id="SM00388">
    <property type="entry name" value="HisKA"/>
    <property type="match status" value="1"/>
</dbReference>
<dbReference type="SMART" id="SM00091">
    <property type="entry name" value="PAS"/>
    <property type="match status" value="2"/>
</dbReference>
<dbReference type="SUPFAM" id="SSF55874">
    <property type="entry name" value="ATPase domain of HSP90 chaperone/DNA topoisomerase II/histidine kinase"/>
    <property type="match status" value="1"/>
</dbReference>
<dbReference type="SUPFAM" id="SSF55781">
    <property type="entry name" value="GAF domain-like"/>
    <property type="match status" value="2"/>
</dbReference>
<dbReference type="SUPFAM" id="SSF55785">
    <property type="entry name" value="PYP-like sensor domain (PAS domain)"/>
    <property type="match status" value="3"/>
</dbReference>
<dbReference type="PROSITE" id="PS50109">
    <property type="entry name" value="HIS_KIN"/>
    <property type="match status" value="1"/>
</dbReference>
<dbReference type="PROSITE" id="PS50112">
    <property type="entry name" value="PAS"/>
    <property type="match status" value="2"/>
</dbReference>
<dbReference type="PROSITE" id="PS00245">
    <property type="entry name" value="PHYTOCHROME_1"/>
    <property type="match status" value="1"/>
</dbReference>
<dbReference type="PROSITE" id="PS50046">
    <property type="entry name" value="PHYTOCHROME_2"/>
    <property type="match status" value="1"/>
</dbReference>
<protein>
    <recommendedName>
        <fullName evidence="26">Phytochrome B</fullName>
    </recommendedName>
    <alternativeName>
        <fullName evidence="27">Protein LONG HYPOCOTYL 3</fullName>
    </alternativeName>
    <alternativeName>
        <fullName evidence="25">Protein OUT OF PHASE 1</fullName>
    </alternativeName>
</protein>
<keyword id="KW-0002">3D-structure</keyword>
<keyword id="KW-0157">Chromophore</keyword>
<keyword id="KW-0963">Cytoplasm</keyword>
<keyword id="KW-0238">DNA-binding</keyword>
<keyword id="KW-0539">Nucleus</keyword>
<keyword id="KW-0600">Photoreceptor protein</keyword>
<keyword id="KW-0607">Phytochrome signaling pathway</keyword>
<keyword id="KW-0675">Receptor</keyword>
<keyword id="KW-1185">Reference proteome</keyword>
<keyword id="KW-0677">Repeat</keyword>
<keyword id="KW-0678">Repressor</keyword>
<keyword id="KW-0716">Sensory transduction</keyword>
<keyword id="KW-0804">Transcription</keyword>
<keyword id="KW-0805">Transcription regulation</keyword>
<evidence type="ECO:0000255" key="1">
    <source>
        <dbReference type="PROSITE-ProRule" id="PRU00107"/>
    </source>
</evidence>
<evidence type="ECO:0000255" key="2">
    <source>
        <dbReference type="PROSITE-ProRule" id="PRU00140"/>
    </source>
</evidence>
<evidence type="ECO:0000256" key="3">
    <source>
        <dbReference type="SAM" id="MobiDB-lite"/>
    </source>
</evidence>
<evidence type="ECO:0000269" key="4">
    <source>
    </source>
</evidence>
<evidence type="ECO:0000269" key="5">
    <source>
    </source>
</evidence>
<evidence type="ECO:0000269" key="6">
    <source>
    </source>
</evidence>
<evidence type="ECO:0000269" key="7">
    <source>
    </source>
</evidence>
<evidence type="ECO:0000269" key="8">
    <source>
    </source>
</evidence>
<evidence type="ECO:0000269" key="9">
    <source>
    </source>
</evidence>
<evidence type="ECO:0000269" key="10">
    <source>
    </source>
</evidence>
<evidence type="ECO:0000269" key="11">
    <source>
    </source>
</evidence>
<evidence type="ECO:0000269" key="12">
    <source>
    </source>
</evidence>
<evidence type="ECO:0000269" key="13">
    <source>
    </source>
</evidence>
<evidence type="ECO:0000269" key="14">
    <source>
    </source>
</evidence>
<evidence type="ECO:0000269" key="15">
    <source>
    </source>
</evidence>
<evidence type="ECO:0000269" key="16">
    <source>
    </source>
</evidence>
<evidence type="ECO:0000269" key="17">
    <source>
    </source>
</evidence>
<evidence type="ECO:0000269" key="18">
    <source>
    </source>
</evidence>
<evidence type="ECO:0000269" key="19">
    <source>
    </source>
</evidence>
<evidence type="ECO:0000269" key="20">
    <source>
    </source>
</evidence>
<evidence type="ECO:0000269" key="21">
    <source>
    </source>
</evidence>
<evidence type="ECO:0000269" key="22">
    <source>
    </source>
</evidence>
<evidence type="ECO:0000269" key="23">
    <source>
    </source>
</evidence>
<evidence type="ECO:0000269" key="24">
    <source>
    </source>
</evidence>
<evidence type="ECO:0000303" key="25">
    <source>
    </source>
</evidence>
<evidence type="ECO:0000303" key="26">
    <source>
    </source>
</evidence>
<evidence type="ECO:0000303" key="27">
    <source>
    </source>
</evidence>
<evidence type="ECO:0000305" key="28"/>
<evidence type="ECO:0000312" key="29">
    <source>
        <dbReference type="Araport" id="AT2G18790"/>
    </source>
</evidence>
<evidence type="ECO:0000312" key="30">
    <source>
        <dbReference type="EMBL" id="AAD08948.1"/>
    </source>
</evidence>
<evidence type="ECO:0007744" key="31">
    <source>
        <dbReference type="PDB" id="4OUR"/>
    </source>
</evidence>
<evidence type="ECO:0007829" key="32">
    <source>
        <dbReference type="PDB" id="4OUR"/>
    </source>
</evidence>
<evidence type="ECO:0007829" key="33">
    <source>
        <dbReference type="PDB" id="7RZW"/>
    </source>
</evidence>
<evidence type="ECO:0007829" key="34">
    <source>
        <dbReference type="PDB" id="8YB4"/>
    </source>
</evidence>
<gene>
    <name evidence="26" type="primary">PHYB</name>
    <name evidence="27" type="synonym">HY3</name>
    <name evidence="25" type="synonym">OOP1</name>
    <name evidence="29" type="ordered locus">At2g18790</name>
    <name evidence="30" type="ORF">MSF3.17</name>
</gene>
<reference key="1">
    <citation type="journal article" date="1989" name="Genes Dev.">
        <title>Novel phytochrome sequences in Arabidopsis thaliana: structure, evolution, and differential expression of a plant regulatory photoreceptor family.</title>
        <authorList>
            <person name="Sharrock R.A."/>
            <person name="Quail P.H."/>
        </authorList>
    </citation>
    <scope>NUCLEOTIDE SEQUENCE [MRNA]</scope>
    <source>
        <strain>cv. Columbia</strain>
    </source>
</reference>
<reference key="2">
    <citation type="journal article" date="1993" name="Plant Cell">
        <title>Mutations in the gene for the red/far-red light receptor phytochrome B alter cell elongation and physiological responses throughout Arabidopsis development.</title>
        <authorList>
            <person name="Reed J.W."/>
            <person name="Nagpal P."/>
            <person name="Poole D.S."/>
            <person name="Furuya M."/>
            <person name="Chory J."/>
        </authorList>
    </citation>
    <scope>NUCLEOTIDE SEQUENCE [GENOMIC DNA]</scope>
    <source>
        <strain>cv. Landsberg erecta</strain>
    </source>
</reference>
<reference key="3">
    <citation type="journal article" date="2004" name="Genetics">
        <title>Light-response quantitative trait loci identified with composite interval and eXtreme array mapping in Arabidopsis thaliana.</title>
        <authorList>
            <person name="Wolyn D.J."/>
            <person name="Borevitz J.O."/>
            <person name="Loudet O."/>
            <person name="Schwartz C."/>
            <person name="Maloof J."/>
            <person name="Ecker J.R."/>
            <person name="Berry C.C."/>
            <person name="Chory J."/>
        </authorList>
    </citation>
    <scope>NUCLEOTIDE SEQUENCE [GENOMIC DNA]</scope>
    <scope>VARIANTS 9-GLY--ARG-12 DEL; GLU-19; ILE-143; VAL-980 AND LEU-1072</scope>
    <source>
        <strain>cv. Kas-1</strain>
    </source>
</reference>
<reference key="4">
    <citation type="journal article" date="1999" name="Nature">
        <title>Sequence and analysis of chromosome 2 of the plant Arabidopsis thaliana.</title>
        <authorList>
            <person name="Lin X."/>
            <person name="Kaul S."/>
            <person name="Rounsley S.D."/>
            <person name="Shea T.P."/>
            <person name="Benito M.-I."/>
            <person name="Town C.D."/>
            <person name="Fujii C.Y."/>
            <person name="Mason T.M."/>
            <person name="Bowman C.L."/>
            <person name="Barnstead M.E."/>
            <person name="Feldblyum T.V."/>
            <person name="Buell C.R."/>
            <person name="Ketchum K.A."/>
            <person name="Lee J.J."/>
            <person name="Ronning C.M."/>
            <person name="Koo H.L."/>
            <person name="Moffat K.S."/>
            <person name="Cronin L.A."/>
            <person name="Shen M."/>
            <person name="Pai G."/>
            <person name="Van Aken S."/>
            <person name="Umayam L."/>
            <person name="Tallon L.J."/>
            <person name="Gill J.E."/>
            <person name="Adams M.D."/>
            <person name="Carrera A.J."/>
            <person name="Creasy T.H."/>
            <person name="Goodman H.M."/>
            <person name="Somerville C.R."/>
            <person name="Copenhaver G.P."/>
            <person name="Preuss D."/>
            <person name="Nierman W.C."/>
            <person name="White O."/>
            <person name="Eisen J.A."/>
            <person name="Salzberg S.L."/>
            <person name="Fraser C.M."/>
            <person name="Venter J.C."/>
        </authorList>
    </citation>
    <scope>NUCLEOTIDE SEQUENCE [LARGE SCALE GENOMIC DNA]</scope>
    <source>
        <strain>cv. Columbia</strain>
    </source>
</reference>
<reference key="5">
    <citation type="journal article" date="2017" name="Plant J.">
        <title>Araport11: a complete reannotation of the Arabidopsis thaliana reference genome.</title>
        <authorList>
            <person name="Cheng C.Y."/>
            <person name="Krishnakumar V."/>
            <person name="Chan A.P."/>
            <person name="Thibaud-Nissen F."/>
            <person name="Schobel S."/>
            <person name="Town C.D."/>
        </authorList>
    </citation>
    <scope>GENOME REANNOTATION</scope>
    <source>
        <strain>cv. Columbia</strain>
    </source>
</reference>
<reference key="6">
    <citation type="journal article" date="2001" name="Nature">
        <title>An Arabidopsis circadian clock component interacts with both CRY1 and phyB.</title>
        <authorList>
            <person name="Jarillo J.A."/>
            <person name="Capel J."/>
            <person name="Tang R.-H."/>
            <person name="Yang H.-Q."/>
            <person name="Alonso J.M."/>
            <person name="Ecker J.R."/>
            <person name="Cashmore A.R."/>
        </authorList>
    </citation>
    <scope>INTERACTION WITH ADO1</scope>
</reference>
<reference key="7">
    <citation type="journal article" date="2002" name="Plant Cell">
        <title>A phytochrome-associated protein phosphatase 2A modulates light signals in flowering time control in Arabidopsis.</title>
        <authorList>
            <person name="Kim D.-H."/>
            <person name="Kang J.-G."/>
            <person name="Yang S.-S."/>
            <person name="Chung K.-S."/>
            <person name="Song P.-S."/>
            <person name="Park C.-M."/>
        </authorList>
    </citation>
    <scope>FUNCTION</scope>
    <scope>INTERACTION WITH FYPP3</scope>
</reference>
<reference key="8">
    <citation type="journal article" date="2002" name="Plant Physiol.">
        <title>The out of phase 1 mutant defines a role for PHYB in circadian phase control in Arabidopsis.</title>
        <authorList>
            <person name="Salome P.A."/>
            <person name="Michael T.P."/>
            <person name="Kearns E.V."/>
            <person name="Fett-Neto A.G."/>
            <person name="Sharrock R.A."/>
            <person name="McClung C.R."/>
        </authorList>
    </citation>
    <scope>FUNCTION</scope>
    <scope>DISRUPTION PHENOTYPE</scope>
    <source>
        <strain>cv. Columbia</strain>
    </source>
</reference>
<reference key="9">
    <citation type="journal article" date="2005" name="Cell">
        <title>Phytochrome-specific type 5 phosphatase controls light signal flux by enhancing phytochrome stability and affinity for a signal transducer.</title>
        <authorList>
            <person name="Ryu J.S."/>
            <person name="Kim J.-I."/>
            <person name="Kunkel T."/>
            <person name="Kim B.C."/>
            <person name="Cho D.S."/>
            <person name="Hong S.H."/>
            <person name="Kim S.-H."/>
            <person name="Fernandez A.P."/>
            <person name="Kim Y."/>
            <person name="Alonso J.M."/>
            <person name="Ecker J.R."/>
            <person name="Nagy F."/>
            <person name="Lim P.O."/>
            <person name="Song P.-S."/>
            <person name="Schaefer E."/>
            <person name="Nam H.G."/>
        </authorList>
    </citation>
    <scope>FUNCTION</scope>
    <scope>SUBCELLULAR LOCATION</scope>
    <scope>INTERACTION WITH PAPP5</scope>
</reference>
<reference key="10">
    <citation type="journal article" date="2008" name="Plant Physiol.">
        <title>PHYTOCHROME KINASE SUBSTRATE4 modulates phytochrome-mediated control of hypocotyl growth orientation.</title>
        <authorList>
            <person name="Schepens I."/>
            <person name="Boccalandro H.E."/>
            <person name="Kami C."/>
            <person name="Casal J.J."/>
            <person name="Fankhauser C."/>
        </authorList>
    </citation>
    <scope>INTERACTION WITH PKS4</scope>
</reference>
<reference key="11">
    <citation type="journal article" date="2012" name="Genes Dev.">
        <title>Photoactivated phytochromes interact with HEMERA and promote its accumulation to establish photomorphogenesis in Arabidopsis.</title>
        <authorList>
            <person name="Galvao R.M."/>
            <person name="Li M."/>
            <person name="Kothadia S.M."/>
            <person name="Haskel J.D."/>
            <person name="Decker P.V."/>
            <person name="Van Buskirk E.K."/>
            <person name="Chen M."/>
        </authorList>
    </citation>
    <scope>INTERACTION WITH PTAC12/HMR/PAP5</scope>
    <scope>MUTAGENESIS OF TYR-276</scope>
    <source>
        <strain>cv. Columbia</strain>
    </source>
</reference>
<reference key="12">
    <citation type="journal article" date="2012" name="J. Biol. Chem.">
        <title>Light-dependent, dark-promoted interaction between Arabidopsis cryptochrome 1 and phytochrome B proteins.</title>
        <authorList>
            <person name="Hughes R.M."/>
            <person name="Vrana J.D."/>
            <person name="Song J."/>
            <person name="Tucker C.L."/>
        </authorList>
    </citation>
    <scope>INTERACTION WITH CRYA</scope>
</reference>
<reference key="13">
    <citation type="journal article" date="2012" name="Plant Cell">
        <title>The phytochrome-interacting VASCULAR PLANT ONE-ZINC FINGER1 and VOZ2 redundantly regulate flowering in Arabidopsis.</title>
        <authorList>
            <person name="Yasui Y."/>
            <person name="Mukougawa K."/>
            <person name="Uemoto M."/>
            <person name="Yokofuji A."/>
            <person name="Suzuri R."/>
            <person name="Nishitani A."/>
            <person name="Kohchi T."/>
        </authorList>
    </citation>
    <scope>INTERACTION WITH VOZ1 AND VOZ2</scope>
</reference>
<reference key="14">
    <citation type="journal article" date="2013" name="Mol. Cells">
        <title>Phytochrome-interacting factors have both shared and distinct biological roles.</title>
        <authorList>
            <person name="Jeong J."/>
            <person name="Choi G."/>
        </authorList>
    </citation>
    <scope>TISSUE SPECIFICITY</scope>
    <scope>DEVELOPMENTAL STAGE</scope>
    <scope>REVIEW</scope>
</reference>
<reference key="15">
    <citation type="journal article" date="2013" name="Proc. Natl. Acad. Sci. U.S.A.">
        <title>PHYTOCHROME-DEPENDENT LATE-FLOWERING accelerates flowering through physical interactions with phytochrome B and CONSTANS.</title>
        <authorList>
            <person name="Endo M."/>
            <person name="Tanigawa Y."/>
            <person name="Murakami T."/>
            <person name="Araki T."/>
            <person name="Nagatani A."/>
        </authorList>
    </citation>
    <scope>INTERACTION WITH PHL</scope>
    <scope>SUBCELLULAR LOCATION</scope>
</reference>
<reference key="16">
    <citation type="journal article" date="2016" name="Cell">
        <title>Cryptochromes interact directly with PIFs to control plant growth in limiting blue light.</title>
        <authorList>
            <person name="Pedmale U.V."/>
            <person name="Huang S.S."/>
            <person name="Zander M."/>
            <person name="Cole B.J."/>
            <person name="Hetzel J."/>
            <person name="Ljung K."/>
            <person name="Reis P.A."/>
            <person name="Sridevi P."/>
            <person name="Nito K."/>
            <person name="Nery J.R."/>
            <person name="Ecker J.R."/>
            <person name="Chory J."/>
        </authorList>
    </citation>
    <scope>INTERACTION WITH PIF4 AND PIF5</scope>
</reference>
<reference key="17">
    <citation type="journal article" date="2016" name="Science">
        <title>Phytochromes function as thermosensors in Arabidopsis.</title>
        <authorList>
            <person name="Jung J.-H."/>
            <person name="Domijan M."/>
            <person name="Klose C."/>
            <person name="Biswas S."/>
            <person name="Ezer D."/>
            <person name="Gao M."/>
            <person name="Khattak A.K."/>
            <person name="Box M.S."/>
            <person name="Charoensawan V."/>
            <person name="Cortijo S."/>
            <person name="Kumar M."/>
            <person name="Grant A."/>
            <person name="Locke J.C.W."/>
            <person name="Schaefer E."/>
            <person name="Jaeger K.E."/>
            <person name="Wigge P.A."/>
        </authorList>
    </citation>
    <scope>FUNCTION</scope>
    <scope>MUTAGENESIS OF TYR-276</scope>
    <scope>INDUCTION BY TEMPERATURE</scope>
    <source>
        <strain>cv. Columbia</strain>
    </source>
</reference>
<reference key="18">
    <citation type="journal article" date="2017" name="FEBS Lett.">
        <title>Structural communication between the chromophore-binding pocket and the N-terminal extension in plant phytochrome phyB.</title>
        <authorList>
            <person name="Velazquez Escobar F."/>
            <person name="Buhrke D."/>
            <person name="Fernandez Lopez M."/>
            <person name="Shenkutie S.M."/>
            <person name="von Horsten S."/>
            <person name="Essen L.O."/>
            <person name="Hughes J."/>
            <person name="Hildebrandt P."/>
        </authorList>
    </citation>
    <scope>COMPLEX WITH PHYTOCHROMOBILIN</scope>
</reference>
<reference key="19">
    <citation type="journal article" date="2017" name="Nat. Commun.">
        <title>PCH1 and PCHL promote photomorphogenesis in plants by controlling phytochrome B dark reversion.</title>
        <authorList>
            <person name="Enderle B."/>
            <person name="Sheerin D.J."/>
            <person name="Paik I."/>
            <person name="Kathare P.K."/>
            <person name="Schwenk P."/>
            <person name="Klose C."/>
            <person name="Ulbrich M.H."/>
            <person name="Huq E."/>
            <person name="Hiltbrunner A."/>
        </authorList>
    </citation>
    <scope>INTERACTION WITH PCH1 AND PCHL</scope>
    <scope>SUBCELLULAR LOCATION</scope>
    <source>
        <strain>cv. Columbia</strain>
    </source>
</reference>
<reference key="20">
    <citation type="journal article" date="2017" name="Proc. Natl. Acad. Sci. U.S.A.">
        <title>SPF45-related splicing factor for phytochrome signaling promotes photomorphogenesis by regulating pre-mRNA splicing in Arabidopsis.</title>
        <authorList>
            <person name="Xin R."/>
            <person name="Zhu L."/>
            <person name="Salome P.A."/>
            <person name="Mancini E."/>
            <person name="Marshall C.M."/>
            <person name="Harmon F.G."/>
            <person name="Yanovsky M.J."/>
            <person name="Weigel D."/>
            <person name="Huq E."/>
        </authorList>
    </citation>
    <scope>INTERACTION WITH DRT111/RSN2/SFPS</scope>
    <scope>SUBCELLULAR LOCATION</scope>
    <source>
        <strain>cv. Columbia</strain>
    </source>
</reference>
<reference key="21">
    <citation type="journal article" date="2019" name="Nat. Commun.">
        <title>Daytime temperature is sensed by phytochrome B in Arabidopsis through a transcriptional activator HEMERA.</title>
        <authorList>
            <person name="Qiu Y."/>
            <person name="Li M."/>
            <person name="Kim R.J.-A."/>
            <person name="Moore C.M."/>
            <person name="Chen M."/>
        </authorList>
    </citation>
    <scope>FUNCTION</scope>
    <scope>DISRUPTION PHENOTYPE</scope>
    <source>
        <strain>cv. Columbia</strain>
    </source>
</reference>
<reference key="22">
    <citation type="journal article" date="2020" name="Plant Cell">
        <title>PHYTOCHROME INTERACTING FACTOR8 inhibits phytochrome a-mediated far-red light responses in Arabidopsis.</title>
        <authorList>
            <person name="Oh J."/>
            <person name="Park E."/>
            <person name="Song K."/>
            <person name="Bae G."/>
            <person name="Choi G."/>
        </authorList>
    </citation>
    <scope>FUNCTION</scope>
    <scope>INTERACTION WITH UNE10/PIF8</scope>
    <source>
        <strain>cv. Columbia</strain>
    </source>
</reference>
<reference key="23">
    <citation type="journal article" date="2022" name="Front. Plant Sci.">
        <title>SWELLMAP 2, a phyB-interacting splicing factor, negatively regulates seedling photomorphogenesis in Arabidopsis.</title>
        <authorList>
            <person name="Yan T."/>
            <person name="Heng Y."/>
            <person name="Wang W."/>
            <person name="Li J."/>
            <person name="Deng X.W."/>
        </authorList>
    </citation>
    <scope>INTERACTION WITH SMP2</scope>
    <scope>SUBCELLULAR LOCATION</scope>
    <source>
        <strain>cv. Columbia</strain>
    </source>
</reference>
<reference key="24">
    <citation type="journal article" date="2022" name="Proc. Natl. Acad. Sci. U.S.A.">
        <title>SWAP1-SFPS-RRC1 splicing factor complex modulates pre-mRNA splicing to promote photomorphogenesis in Arabidopsis.</title>
        <authorList>
            <person name="Kathare P.K."/>
            <person name="Xin R."/>
            <person name="Ganesan A.S."/>
            <person name="June V.M."/>
            <person name="Reddy A.S.N."/>
            <person name="Huq E."/>
        </authorList>
    </citation>
    <scope>INTERACTION WITH SWAP1</scope>
    <source>
        <strain>cv. Columbia</strain>
    </source>
</reference>
<reference key="25">
    <citation type="journal article" date="2014" name="Proc. Natl. Acad. Sci. U.S.A.">
        <title>Crystal structure of the photosensing module from a red/far-red light-absorbing plant phytochrome.</title>
        <authorList>
            <person name="Burgie E.S."/>
            <person name="Bussell A.N."/>
            <person name="Walker J.M."/>
            <person name="Dubiel K."/>
            <person name="Vierstra R.D."/>
        </authorList>
    </citation>
    <scope>X-RAY CRYSTALLOGRAPHY (3.40 ANGSTROMS) OF 90-624 IN COMPLEX WITH PHYTOCHROMOBILIN</scope>
    <scope>HOMODIMERIZATION</scope>
</reference>
<feature type="chain" id="PRO_0000171963" description="Phytochrome B">
    <location>
        <begin position="1"/>
        <end position="1172"/>
    </location>
</feature>
<feature type="domain" description="GAF" evidence="28">
    <location>
        <begin position="252"/>
        <end position="433"/>
    </location>
</feature>
<feature type="domain" description="PAS 1" evidence="2">
    <location>
        <begin position="652"/>
        <end position="723"/>
    </location>
</feature>
<feature type="domain" description="PAS 2" evidence="2">
    <location>
        <begin position="786"/>
        <end position="857"/>
    </location>
</feature>
<feature type="domain" description="Histidine kinase" evidence="1">
    <location>
        <begin position="934"/>
        <end position="1153"/>
    </location>
</feature>
<feature type="region of interest" description="Disordered" evidence="3">
    <location>
        <begin position="1"/>
        <end position="54"/>
    </location>
</feature>
<feature type="compositionally biased region" description="Gly residues" evidence="3">
    <location>
        <begin position="1"/>
        <end position="16"/>
    </location>
</feature>
<feature type="compositionally biased region" description="Polar residues" evidence="3">
    <location>
        <begin position="24"/>
        <end position="54"/>
    </location>
</feature>
<feature type="binding site" description="covalent" evidence="15 31">
    <location>
        <position position="357"/>
    </location>
    <ligand>
        <name>phytochromobilin</name>
        <dbReference type="ChEBI" id="CHEBI:189064"/>
    </ligand>
</feature>
<feature type="sequence variant" description="In strain: cv. Kas-1." evidence="7">
    <location>
        <begin position="9"/>
        <end position="12"/>
    </location>
</feature>
<feature type="sequence variant" description="In strain: cv. Kas-1." evidence="7">
    <original>E</original>
    <variation>K</variation>
    <location>
        <position position="19"/>
    </location>
</feature>
<feature type="sequence variant" description="In strain: cv. Kas-1." evidence="7">
    <original>I</original>
    <variation>L</variation>
    <location>
        <position position="143"/>
    </location>
</feature>
<feature type="sequence variant" description="In strain: cv. Kas-1." evidence="7">
    <original>V</original>
    <variation>I</variation>
    <location>
        <position position="980"/>
    </location>
</feature>
<feature type="sequence variant" description="In strain: cv. Kas-1." evidence="7">
    <original>L</original>
    <variation>V</variation>
    <location>
        <position position="1072"/>
    </location>
</feature>
<feature type="mutagenesis site" description="In YHB; constitutively active and stronger interaction with PTAC12/HMR/PAP5 in the dark. Constitutive warm-temperature response with the warm-temperature transcriptome derepressed at low temperatures." evidence="11 17">
    <original>Y</original>
    <variation>H</variation>
    <location>
        <position position="276"/>
    </location>
</feature>
<feature type="helix" evidence="34">
    <location>
        <begin position="56"/>
        <end position="76"/>
    </location>
</feature>
<feature type="helix" evidence="34">
    <location>
        <begin position="83"/>
        <end position="89"/>
    </location>
</feature>
<feature type="helix" evidence="34">
    <location>
        <begin position="98"/>
        <end position="109"/>
    </location>
</feature>
<feature type="strand" evidence="32">
    <location>
        <begin position="112"/>
        <end position="114"/>
    </location>
</feature>
<feature type="strand" evidence="34">
    <location>
        <begin position="118"/>
        <end position="124"/>
    </location>
</feature>
<feature type="turn" evidence="34">
    <location>
        <begin position="125"/>
        <end position="128"/>
    </location>
</feature>
<feature type="strand" evidence="34">
    <location>
        <begin position="129"/>
        <end position="134"/>
    </location>
</feature>
<feature type="helix" evidence="34">
    <location>
        <begin position="136"/>
        <end position="141"/>
    </location>
</feature>
<feature type="helix" evidence="34">
    <location>
        <begin position="163"/>
        <end position="165"/>
    </location>
</feature>
<feature type="helix" evidence="34">
    <location>
        <begin position="169"/>
        <end position="179"/>
    </location>
</feature>
<feature type="turn" evidence="33">
    <location>
        <begin position="185"/>
        <end position="187"/>
    </location>
</feature>
<feature type="strand" evidence="34">
    <location>
        <begin position="189"/>
        <end position="197"/>
    </location>
</feature>
<feature type="strand" evidence="34">
    <location>
        <begin position="200"/>
        <end position="207"/>
    </location>
</feature>
<feature type="strand" evidence="34">
    <location>
        <begin position="209"/>
        <end position="218"/>
    </location>
</feature>
<feature type="helix" evidence="34">
    <location>
        <begin position="224"/>
        <end position="246"/>
    </location>
</feature>
<feature type="helix" evidence="34">
    <location>
        <begin position="254"/>
        <end position="267"/>
    </location>
</feature>
<feature type="strand" evidence="34">
    <location>
        <begin position="271"/>
        <end position="278"/>
    </location>
</feature>
<feature type="strand" evidence="34">
    <location>
        <begin position="280"/>
        <end position="282"/>
    </location>
</feature>
<feature type="strand" evidence="34">
    <location>
        <begin position="284"/>
        <end position="290"/>
    </location>
</feature>
<feature type="strand" evidence="34">
    <location>
        <begin position="293"/>
        <end position="295"/>
    </location>
</feature>
<feature type="helix" evidence="34">
    <location>
        <begin position="305"/>
        <end position="307"/>
    </location>
</feature>
<feature type="helix" evidence="34">
    <location>
        <begin position="310"/>
        <end position="318"/>
    </location>
</feature>
<feature type="strand" evidence="34">
    <location>
        <begin position="319"/>
        <end position="324"/>
    </location>
</feature>
<feature type="strand" evidence="34">
    <location>
        <begin position="327"/>
        <end position="329"/>
    </location>
</feature>
<feature type="strand" evidence="34">
    <location>
        <begin position="332"/>
        <end position="335"/>
    </location>
</feature>
<feature type="helix" evidence="34">
    <location>
        <begin position="356"/>
        <end position="365"/>
    </location>
</feature>
<feature type="strand" evidence="34">
    <location>
        <begin position="370"/>
        <end position="379"/>
    </location>
</feature>
<feature type="strand" evidence="34">
    <location>
        <begin position="393"/>
        <end position="403"/>
    </location>
</feature>
<feature type="helix" evidence="34">
    <location>
        <begin position="412"/>
        <end position="457"/>
    </location>
</feature>
<feature type="helix" evidence="34">
    <location>
        <begin position="462"/>
        <end position="465"/>
    </location>
</feature>
<feature type="strand" evidence="34">
    <location>
        <begin position="466"/>
        <end position="468"/>
    </location>
</feature>
<feature type="helix" evidence="34">
    <location>
        <begin position="470"/>
        <end position="472"/>
    </location>
</feature>
<feature type="strand" evidence="32">
    <location>
        <begin position="473"/>
        <end position="475"/>
    </location>
</feature>
<feature type="strand" evidence="34">
    <location>
        <begin position="477"/>
        <end position="483"/>
    </location>
</feature>
<feature type="strand" evidence="34">
    <location>
        <begin position="486"/>
        <end position="492"/>
    </location>
</feature>
<feature type="helix" evidence="34">
    <location>
        <begin position="496"/>
        <end position="509"/>
    </location>
</feature>
<feature type="strand" evidence="34">
    <location>
        <begin position="514"/>
        <end position="519"/>
    </location>
</feature>
<feature type="helix" evidence="34">
    <location>
        <begin position="521"/>
        <end position="524"/>
    </location>
</feature>
<feature type="helix" evidence="34">
    <location>
        <begin position="529"/>
        <end position="532"/>
    </location>
</feature>
<feature type="helix" evidence="33">
    <location>
        <begin position="534"/>
        <end position="536"/>
    </location>
</feature>
<feature type="strand" evidence="34">
    <location>
        <begin position="538"/>
        <end position="547"/>
    </location>
</feature>
<feature type="strand" evidence="34">
    <location>
        <begin position="549"/>
        <end position="554"/>
    </location>
</feature>
<feature type="helix" evidence="34">
    <location>
        <begin position="557"/>
        <end position="560"/>
    </location>
</feature>
<feature type="strand" evidence="32">
    <location>
        <begin position="561"/>
        <end position="566"/>
    </location>
</feature>
<feature type="helix" evidence="34">
    <location>
        <begin position="581"/>
        <end position="591"/>
    </location>
</feature>
<feature type="turn" evidence="34">
    <location>
        <begin position="592"/>
        <end position="594"/>
    </location>
</feature>
<feature type="helix" evidence="34">
    <location>
        <begin position="601"/>
        <end position="620"/>
    </location>
</feature>
<feature type="strand" evidence="33">
    <location>
        <begin position="780"/>
        <end position="783"/>
    </location>
</feature>
<feature type="strand" evidence="33">
    <location>
        <begin position="785"/>
        <end position="787"/>
    </location>
</feature>
<feature type="strand" evidence="33">
    <location>
        <begin position="790"/>
        <end position="792"/>
    </location>
</feature>
<feature type="strand" evidence="33">
    <location>
        <begin position="801"/>
        <end position="804"/>
    </location>
</feature>
<feature type="strand" evidence="33">
    <location>
        <begin position="809"/>
        <end position="813"/>
    </location>
</feature>
<feature type="helix" evidence="33">
    <location>
        <begin position="815"/>
        <end position="821"/>
    </location>
</feature>
<feature type="helix" evidence="33">
    <location>
        <begin position="825"/>
        <end position="828"/>
    </location>
</feature>
<feature type="turn" evidence="33">
    <location>
        <begin position="833"/>
        <end position="835"/>
    </location>
</feature>
<feature type="helix" evidence="33">
    <location>
        <begin position="836"/>
        <end position="839"/>
    </location>
</feature>
<feature type="turn" evidence="33">
    <location>
        <begin position="840"/>
        <end position="842"/>
    </location>
</feature>
<feature type="helix" evidence="33">
    <location>
        <begin position="849"/>
        <end position="862"/>
    </location>
</feature>
<feature type="strand" evidence="33">
    <location>
        <begin position="866"/>
        <end position="874"/>
    </location>
</feature>
<feature type="strand" evidence="33">
    <location>
        <begin position="880"/>
        <end position="889"/>
    </location>
</feature>
<feature type="strand" evidence="33">
    <location>
        <begin position="893"/>
        <end position="896"/>
    </location>
</feature>
<feature type="strand" evidence="33">
    <location>
        <begin position="900"/>
        <end position="905"/>
    </location>
</feature>
<feature type="helix" evidence="33">
    <location>
        <begin position="909"/>
        <end position="919"/>
    </location>
</feature>
<feature type="turn" evidence="33">
    <location>
        <begin position="920"/>
        <end position="924"/>
    </location>
</feature>
<feature type="turn" evidence="33">
    <location>
        <begin position="926"/>
        <end position="928"/>
    </location>
</feature>
<feature type="helix" evidence="33">
    <location>
        <begin position="929"/>
        <end position="938"/>
    </location>
</feature>
<feature type="helix" evidence="33">
    <location>
        <begin position="940"/>
        <end position="953"/>
    </location>
</feature>
<feature type="helix" evidence="33">
    <location>
        <begin position="960"/>
        <end position="982"/>
    </location>
</feature>
<feature type="strand" evidence="33">
    <location>
        <begin position="987"/>
        <end position="990"/>
    </location>
</feature>
<feature type="strand" evidence="33">
    <location>
        <begin position="998"/>
        <end position="1000"/>
    </location>
</feature>
<feature type="helix" evidence="33">
    <location>
        <begin position="1003"/>
        <end position="1006"/>
    </location>
</feature>
<feature type="turn" evidence="33">
    <location>
        <begin position="1007"/>
        <end position="1013"/>
    </location>
</feature>
<feature type="helix" evidence="33">
    <location>
        <begin position="1014"/>
        <end position="1019"/>
    </location>
</feature>
<feature type="strand" evidence="33">
    <location>
        <begin position="1023"/>
        <end position="1027"/>
    </location>
</feature>
<feature type="strand" evidence="33">
    <location>
        <begin position="1037"/>
        <end position="1039"/>
    </location>
</feature>
<feature type="helix" evidence="33">
    <location>
        <begin position="1041"/>
        <end position="1057"/>
    </location>
</feature>
<feature type="strand" evidence="33">
    <location>
        <begin position="1064"/>
        <end position="1068"/>
    </location>
</feature>
<feature type="strand" evidence="33">
    <location>
        <begin position="1071"/>
        <end position="1075"/>
    </location>
</feature>
<feature type="strand" evidence="33">
    <location>
        <begin position="1077"/>
        <end position="1079"/>
    </location>
</feature>
<feature type="strand" evidence="33">
    <location>
        <begin position="1081"/>
        <end position="1085"/>
    </location>
</feature>
<feature type="strand" evidence="33">
    <location>
        <begin position="1092"/>
        <end position="1094"/>
    </location>
</feature>
<feature type="helix" evidence="33">
    <location>
        <begin position="1098"/>
        <end position="1104"/>
    </location>
</feature>
<feature type="helix" evidence="33">
    <location>
        <begin position="1113"/>
        <end position="1127"/>
    </location>
</feature>
<feature type="strand" evidence="33">
    <location>
        <begin position="1130"/>
        <end position="1135"/>
    </location>
</feature>
<feature type="strand" evidence="33">
    <location>
        <begin position="1137"/>
        <end position="1139"/>
    </location>
</feature>
<feature type="strand" evidence="33">
    <location>
        <begin position="1141"/>
        <end position="1148"/>
    </location>
</feature>
<proteinExistence type="evidence at protein level"/>